<protein>
    <recommendedName>
        <fullName evidence="1">Orotate phosphoribosyltransferase</fullName>
        <shortName evidence="1">OPRT</shortName>
        <shortName evidence="1">OPRTase</shortName>
        <ecNumber evidence="1">2.4.2.10</ecNumber>
    </recommendedName>
</protein>
<dbReference type="EC" id="2.4.2.10" evidence="1"/>
<dbReference type="EMBL" id="AP009256">
    <property type="protein sequence ID" value="BAF39546.1"/>
    <property type="molecule type" value="Genomic_DNA"/>
</dbReference>
<dbReference type="RefSeq" id="WP_011743305.1">
    <property type="nucleotide sequence ID" value="NZ_CAXVJJ010000001.1"/>
</dbReference>
<dbReference type="SMR" id="A1A1G3"/>
<dbReference type="STRING" id="367928.BAD_0765"/>
<dbReference type="PaxDb" id="1680-BADO_0813"/>
<dbReference type="GeneID" id="4556608"/>
<dbReference type="KEGG" id="bad:BAD_0765"/>
<dbReference type="HOGENOM" id="CLU_074878_0_1_11"/>
<dbReference type="UniPathway" id="UPA00070">
    <property type="reaction ID" value="UER00119"/>
</dbReference>
<dbReference type="Proteomes" id="UP000008702">
    <property type="component" value="Chromosome"/>
</dbReference>
<dbReference type="GO" id="GO:0005737">
    <property type="term" value="C:cytoplasm"/>
    <property type="evidence" value="ECO:0007669"/>
    <property type="project" value="TreeGrafter"/>
</dbReference>
<dbReference type="GO" id="GO:0000287">
    <property type="term" value="F:magnesium ion binding"/>
    <property type="evidence" value="ECO:0007669"/>
    <property type="project" value="UniProtKB-UniRule"/>
</dbReference>
<dbReference type="GO" id="GO:0004588">
    <property type="term" value="F:orotate phosphoribosyltransferase activity"/>
    <property type="evidence" value="ECO:0007669"/>
    <property type="project" value="UniProtKB-UniRule"/>
</dbReference>
<dbReference type="GO" id="GO:0006207">
    <property type="term" value="P:'de novo' pyrimidine nucleobase biosynthetic process"/>
    <property type="evidence" value="ECO:0007669"/>
    <property type="project" value="TreeGrafter"/>
</dbReference>
<dbReference type="GO" id="GO:0044205">
    <property type="term" value="P:'de novo' UMP biosynthetic process"/>
    <property type="evidence" value="ECO:0007669"/>
    <property type="project" value="UniProtKB-UniRule"/>
</dbReference>
<dbReference type="GO" id="GO:0046132">
    <property type="term" value="P:pyrimidine ribonucleoside biosynthetic process"/>
    <property type="evidence" value="ECO:0007669"/>
    <property type="project" value="TreeGrafter"/>
</dbReference>
<dbReference type="CDD" id="cd06223">
    <property type="entry name" value="PRTases_typeI"/>
    <property type="match status" value="1"/>
</dbReference>
<dbReference type="Gene3D" id="3.40.50.2020">
    <property type="match status" value="1"/>
</dbReference>
<dbReference type="HAMAP" id="MF_01208">
    <property type="entry name" value="PyrE"/>
    <property type="match status" value="1"/>
</dbReference>
<dbReference type="InterPro" id="IPR023031">
    <property type="entry name" value="OPRT"/>
</dbReference>
<dbReference type="InterPro" id="IPR004467">
    <property type="entry name" value="Or_phspho_trans_dom"/>
</dbReference>
<dbReference type="InterPro" id="IPR000836">
    <property type="entry name" value="PRibTrfase_dom"/>
</dbReference>
<dbReference type="InterPro" id="IPR029057">
    <property type="entry name" value="PRTase-like"/>
</dbReference>
<dbReference type="NCBIfam" id="TIGR00336">
    <property type="entry name" value="pyrE"/>
    <property type="match status" value="1"/>
</dbReference>
<dbReference type="PANTHER" id="PTHR46683">
    <property type="entry name" value="OROTATE PHOSPHORIBOSYLTRANSFERASE 1-RELATED"/>
    <property type="match status" value="1"/>
</dbReference>
<dbReference type="PANTHER" id="PTHR46683:SF1">
    <property type="entry name" value="OROTATE PHOSPHORIBOSYLTRANSFERASE 1-RELATED"/>
    <property type="match status" value="1"/>
</dbReference>
<dbReference type="Pfam" id="PF00156">
    <property type="entry name" value="Pribosyltran"/>
    <property type="match status" value="1"/>
</dbReference>
<dbReference type="SUPFAM" id="SSF53271">
    <property type="entry name" value="PRTase-like"/>
    <property type="match status" value="1"/>
</dbReference>
<dbReference type="PROSITE" id="PS00103">
    <property type="entry name" value="PUR_PYR_PR_TRANSFER"/>
    <property type="match status" value="1"/>
</dbReference>
<proteinExistence type="inferred from homology"/>
<sequence length="231" mass="24908">MTASLDHRFTEFLLESQALKFGEFTLKSGRKSPYFINAGAFNDGRKIARLGAFYAEKIVEEIEAGNLPKDVDTVFGPAYKGIPLGVSTAIALTSAHGMEVGYTFDRKEKKDHGDGGMMVGTQLADGMKVLLVDDVMTAGTAVREVIPKLKAEANVEVIGLVLSVDRMEKTKDSDTSAVKAVEAEFGFPVFAIANVKEIFEAGQRIQNADGTPYVTPEIKAAADAYLEQYGA</sequence>
<keyword id="KW-0328">Glycosyltransferase</keyword>
<keyword id="KW-0460">Magnesium</keyword>
<keyword id="KW-0665">Pyrimidine biosynthesis</keyword>
<keyword id="KW-1185">Reference proteome</keyword>
<keyword id="KW-0808">Transferase</keyword>
<organism>
    <name type="scientific">Bifidobacterium adolescentis (strain ATCC 15703 / DSM 20083 / NCTC 11814 / E194a)</name>
    <dbReference type="NCBI Taxonomy" id="367928"/>
    <lineage>
        <taxon>Bacteria</taxon>
        <taxon>Bacillati</taxon>
        <taxon>Actinomycetota</taxon>
        <taxon>Actinomycetes</taxon>
        <taxon>Bifidobacteriales</taxon>
        <taxon>Bifidobacteriaceae</taxon>
        <taxon>Bifidobacterium</taxon>
    </lineage>
</organism>
<name>PYRE_BIFAA</name>
<comment type="function">
    <text evidence="1">Catalyzes the transfer of a ribosyl phosphate group from 5-phosphoribose 1-diphosphate to orotate, leading to the formation of orotidine monophosphate (OMP).</text>
</comment>
<comment type="catalytic activity">
    <reaction evidence="1">
        <text>orotidine 5'-phosphate + diphosphate = orotate + 5-phospho-alpha-D-ribose 1-diphosphate</text>
        <dbReference type="Rhea" id="RHEA:10380"/>
        <dbReference type="ChEBI" id="CHEBI:30839"/>
        <dbReference type="ChEBI" id="CHEBI:33019"/>
        <dbReference type="ChEBI" id="CHEBI:57538"/>
        <dbReference type="ChEBI" id="CHEBI:58017"/>
        <dbReference type="EC" id="2.4.2.10"/>
    </reaction>
</comment>
<comment type="cofactor">
    <cofactor evidence="1">
        <name>Mg(2+)</name>
        <dbReference type="ChEBI" id="CHEBI:18420"/>
    </cofactor>
</comment>
<comment type="pathway">
    <text evidence="1">Pyrimidine metabolism; UMP biosynthesis via de novo pathway; UMP from orotate: step 1/2.</text>
</comment>
<comment type="subunit">
    <text evidence="1">Homodimer.</text>
</comment>
<comment type="similarity">
    <text evidence="1">Belongs to the purine/pyrimidine phosphoribosyltransferase family. PyrE subfamily.</text>
</comment>
<reference key="1">
    <citation type="submission" date="2006-12" db="EMBL/GenBank/DDBJ databases">
        <title>Bifidobacterium adolescentis complete genome sequence.</title>
        <authorList>
            <person name="Suzuki T."/>
            <person name="Tsuda Y."/>
            <person name="Kanou N."/>
            <person name="Inoue T."/>
            <person name="Kumazaki K."/>
            <person name="Nagano S."/>
            <person name="Hirai S."/>
            <person name="Tanaka K."/>
            <person name="Watanabe K."/>
        </authorList>
    </citation>
    <scope>NUCLEOTIDE SEQUENCE [LARGE SCALE GENOMIC DNA]</scope>
    <source>
        <strain>ATCC 15703 / DSM 20083 / NCTC 11814 / E194a</strain>
    </source>
</reference>
<evidence type="ECO:0000255" key="1">
    <source>
        <dbReference type="HAMAP-Rule" id="MF_01208"/>
    </source>
</evidence>
<feature type="chain" id="PRO_1000066209" description="Orotate phosphoribosyltransferase">
    <location>
        <begin position="1"/>
        <end position="231"/>
    </location>
</feature>
<feature type="binding site" description="in other chain" evidence="1">
    <location>
        <position position="27"/>
    </location>
    <ligand>
        <name>5-phospho-alpha-D-ribose 1-diphosphate</name>
        <dbReference type="ChEBI" id="CHEBI:58017"/>
        <note>ligand shared between dimeric partners</note>
    </ligand>
</feature>
<feature type="binding site" description="in other chain" evidence="1">
    <location>
        <begin position="79"/>
        <end position="80"/>
    </location>
    <ligand>
        <name>5-phospho-alpha-D-ribose 1-diphosphate</name>
        <dbReference type="ChEBI" id="CHEBI:58017"/>
        <note>ligand shared between dimeric partners</note>
    </ligand>
</feature>
<feature type="binding site" evidence="1">
    <location>
        <position position="106"/>
    </location>
    <ligand>
        <name>5-phospho-alpha-D-ribose 1-diphosphate</name>
        <dbReference type="ChEBI" id="CHEBI:58017"/>
        <note>ligand shared between dimeric partners</note>
    </ligand>
</feature>
<feature type="binding site" description="in other chain" evidence="1">
    <location>
        <position position="107"/>
    </location>
    <ligand>
        <name>5-phospho-alpha-D-ribose 1-diphosphate</name>
        <dbReference type="ChEBI" id="CHEBI:58017"/>
        <note>ligand shared between dimeric partners</note>
    </ligand>
</feature>
<feature type="binding site" evidence="1">
    <location>
        <position position="110"/>
    </location>
    <ligand>
        <name>5-phospho-alpha-D-ribose 1-diphosphate</name>
        <dbReference type="ChEBI" id="CHEBI:58017"/>
        <note>ligand shared between dimeric partners</note>
    </ligand>
</feature>
<feature type="binding site" evidence="1">
    <location>
        <position position="112"/>
    </location>
    <ligand>
        <name>5-phospho-alpha-D-ribose 1-diphosphate</name>
        <dbReference type="ChEBI" id="CHEBI:58017"/>
        <note>ligand shared between dimeric partners</note>
    </ligand>
</feature>
<feature type="binding site" description="in other chain" evidence="1">
    <location>
        <begin position="133"/>
        <end position="141"/>
    </location>
    <ligand>
        <name>5-phospho-alpha-D-ribose 1-diphosphate</name>
        <dbReference type="ChEBI" id="CHEBI:58017"/>
        <note>ligand shared between dimeric partners</note>
    </ligand>
</feature>
<feature type="binding site" evidence="1">
    <location>
        <position position="137"/>
    </location>
    <ligand>
        <name>orotate</name>
        <dbReference type="ChEBI" id="CHEBI:30839"/>
    </ligand>
</feature>
<feature type="binding site" evidence="1">
    <location>
        <position position="166"/>
    </location>
    <ligand>
        <name>orotate</name>
        <dbReference type="ChEBI" id="CHEBI:30839"/>
    </ligand>
</feature>
<gene>
    <name evidence="1" type="primary">pyrE</name>
    <name type="ordered locus">BAD_0765</name>
</gene>
<accession>A1A1G3</accession>